<comment type="function">
    <text evidence="1 4">Rho subunit of the pentameric ligand-gated chloride channels responsible for mediating the effects of gamma-aminobutyric acid (GABA), the major inhibitory neurotransmitter in the brain (PubMed:11861315). Rho-containing GABA-gated chloride channels are a subclass of GABA(A) receptors (GABAARs) entirely composed of rho subunits, where GABA molecules bind at the rho intersubunit interfaces (By similarity). When activated by GABA, rho-GABAARs selectively allow the flow of chloride anions across the cell membrane down their electrochemical gradient (PubMed:11861315).</text>
</comment>
<comment type="catalytic activity">
    <reaction evidence="4">
        <text>chloride(in) = chloride(out)</text>
        <dbReference type="Rhea" id="RHEA:29823"/>
        <dbReference type="ChEBI" id="CHEBI:17996"/>
    </reaction>
</comment>
<comment type="activity regulation">
    <text evidence="4">Activated by agonists in the following the potency order: muscimol &gt; TACP &gt; TACA &gt; thiomuscimol &gt; CAMP &gt; CACA, when forming a homopentamer (PubMed:11861315). Inhibited by TPMPA, a rho-specific antagonist, when forming a homopentamer (PubMed:11861315). Inhibited antagonists in the following the potency order: TAMP = TPMPA &gt; P4MPA = THIP &gt; 14AA &gt; 3-APA, when forming a homopentamer (PubMed:11861315).</text>
</comment>
<comment type="subunit">
    <text evidence="4 5">Three rho subunits (rho-1/GBRR1, rho-2/GBRR2 and rho-3/GBRR3) coassemble either to form functional homopentamers or heteropentamers (PubMed:11861315). Forms a ternary complex with SQSTM1 and PRKCZ (PubMed:12431995).</text>
</comment>
<comment type="subcellular location">
    <subcellularLocation>
        <location>Postsynaptic cell membrane</location>
        <topology evidence="3">Multi-pass membrane protein</topology>
    </subcellularLocation>
    <subcellularLocation>
        <location>Cell membrane</location>
        <topology evidence="3">Multi-pass membrane protein</topology>
    </subcellularLocation>
</comment>
<comment type="tissue specificity">
    <text evidence="6">Expressed in retina.</text>
</comment>
<comment type="domain">
    <text evidence="1">GABAARs subunits share a common topological structure: a peptide sequence made up of a long extracellular N-terminal, four transmembrane domains, intracellular or cytoplasmic domain located between the third and the fourth transmembrane domains.</text>
</comment>
<comment type="similarity">
    <text evidence="9">Belongs to the ligand-gated ion channel (TC 1.A.9) family. Gamma-aminobutyric acid receptor (TC 1.A.9.5) subfamily. GABRR3 sub-subfamily.</text>
</comment>
<dbReference type="EMBL" id="D50671">
    <property type="protein sequence ID" value="BAA09322.1"/>
    <property type="molecule type" value="mRNA"/>
</dbReference>
<dbReference type="PIR" id="S65756">
    <property type="entry name" value="S65756"/>
</dbReference>
<dbReference type="RefSeq" id="NP_620252.1">
    <property type="nucleotide sequence ID" value="NM_138897.2"/>
</dbReference>
<dbReference type="SMR" id="P50573"/>
<dbReference type="BioGRID" id="251384">
    <property type="interactions" value="1"/>
</dbReference>
<dbReference type="CORUM" id="P50573"/>
<dbReference type="FunCoup" id="P50573">
    <property type="interactions" value="33"/>
</dbReference>
<dbReference type="STRING" id="10116.ENSRNOP00000002281"/>
<dbReference type="GlyCosmos" id="P50573">
    <property type="glycosylation" value="2 sites, No reported glycans"/>
</dbReference>
<dbReference type="GlyGen" id="P50573">
    <property type="glycosylation" value="2 sites"/>
</dbReference>
<dbReference type="PhosphoSitePlus" id="P50573"/>
<dbReference type="PaxDb" id="10116-ENSRNOP00000002281"/>
<dbReference type="Ensembl" id="ENSRNOT00000002281.5">
    <property type="protein sequence ID" value="ENSRNOP00000002281.4"/>
    <property type="gene ID" value="ENSRNOG00000001679.5"/>
</dbReference>
<dbReference type="GeneID" id="192258"/>
<dbReference type="KEGG" id="rno:192258"/>
<dbReference type="UCSC" id="RGD:621564">
    <property type="organism name" value="rat"/>
</dbReference>
<dbReference type="AGR" id="RGD:621564"/>
<dbReference type="CTD" id="200959"/>
<dbReference type="RGD" id="621564">
    <property type="gene designation" value="Gabrr3"/>
</dbReference>
<dbReference type="eggNOG" id="KOG3643">
    <property type="taxonomic scope" value="Eukaryota"/>
</dbReference>
<dbReference type="GeneTree" id="ENSGT00940000159906"/>
<dbReference type="HOGENOM" id="CLU_010920_0_1_1"/>
<dbReference type="InParanoid" id="P50573"/>
<dbReference type="OMA" id="STKVWPL"/>
<dbReference type="OrthoDB" id="12966at9989"/>
<dbReference type="PhylomeDB" id="P50573"/>
<dbReference type="TreeFam" id="TF315453"/>
<dbReference type="Reactome" id="R-RNO-977443">
    <property type="pathway name" value="GABA receptor activation"/>
</dbReference>
<dbReference type="PRO" id="PR:P50573"/>
<dbReference type="Proteomes" id="UP000002494">
    <property type="component" value="Chromosome 11"/>
</dbReference>
<dbReference type="Bgee" id="ENSRNOG00000001679">
    <property type="expression patterns" value="Expressed in ovary and 3 other cell types or tissues"/>
</dbReference>
<dbReference type="GO" id="GO:0034707">
    <property type="term" value="C:chloride channel complex"/>
    <property type="evidence" value="ECO:0007669"/>
    <property type="project" value="UniProtKB-KW"/>
</dbReference>
<dbReference type="GO" id="GO:1902711">
    <property type="term" value="C:GABA-A receptor complex"/>
    <property type="evidence" value="ECO:0000318"/>
    <property type="project" value="GO_Central"/>
</dbReference>
<dbReference type="GO" id="GO:0098982">
    <property type="term" value="C:GABA-ergic synapse"/>
    <property type="evidence" value="ECO:0000266"/>
    <property type="project" value="RGD"/>
</dbReference>
<dbReference type="GO" id="GO:0045211">
    <property type="term" value="C:postsynaptic membrane"/>
    <property type="evidence" value="ECO:0000266"/>
    <property type="project" value="RGD"/>
</dbReference>
<dbReference type="GO" id="GO:0004890">
    <property type="term" value="F:GABA-A receptor activity"/>
    <property type="evidence" value="ECO:0000314"/>
    <property type="project" value="UniProtKB"/>
</dbReference>
<dbReference type="GO" id="GO:0022851">
    <property type="term" value="F:GABA-gated chloride ion channel activity"/>
    <property type="evidence" value="ECO:0000314"/>
    <property type="project" value="UniProtKB"/>
</dbReference>
<dbReference type="GO" id="GO:0019904">
    <property type="term" value="F:protein domain specific binding"/>
    <property type="evidence" value="ECO:0000353"/>
    <property type="project" value="RGD"/>
</dbReference>
<dbReference type="GO" id="GO:1902476">
    <property type="term" value="P:chloride transmembrane transport"/>
    <property type="evidence" value="ECO:0000318"/>
    <property type="project" value="GO_Central"/>
</dbReference>
<dbReference type="CDD" id="cd19059">
    <property type="entry name" value="LGIC_TM_GABAAR_rho"/>
    <property type="match status" value="1"/>
</dbReference>
<dbReference type="FunFam" id="2.70.170.10:FF:000007">
    <property type="entry name" value="Gamma-aminobutyric acid type A receptor rho2 subunit"/>
    <property type="match status" value="1"/>
</dbReference>
<dbReference type="FunFam" id="1.20.58.390:FF:000005">
    <property type="entry name" value="Putative gamma-aminobutyric acid receptor subunit rho-2-like"/>
    <property type="match status" value="1"/>
</dbReference>
<dbReference type="Gene3D" id="2.70.170.10">
    <property type="entry name" value="Neurotransmitter-gated ion-channel ligand-binding domain"/>
    <property type="match status" value="1"/>
</dbReference>
<dbReference type="Gene3D" id="1.20.58.390">
    <property type="entry name" value="Neurotransmitter-gated ion-channel transmembrane domain"/>
    <property type="match status" value="1"/>
</dbReference>
<dbReference type="InterPro" id="IPR006028">
    <property type="entry name" value="GABAA/Glycine_rcpt"/>
</dbReference>
<dbReference type="InterPro" id="IPR006202">
    <property type="entry name" value="Neur_chan_lig-bd"/>
</dbReference>
<dbReference type="InterPro" id="IPR036734">
    <property type="entry name" value="Neur_chan_lig-bd_sf"/>
</dbReference>
<dbReference type="InterPro" id="IPR006201">
    <property type="entry name" value="Neur_channel"/>
</dbReference>
<dbReference type="InterPro" id="IPR036719">
    <property type="entry name" value="Neuro-gated_channel_TM_sf"/>
</dbReference>
<dbReference type="InterPro" id="IPR038050">
    <property type="entry name" value="Neuro_actylchol_rec"/>
</dbReference>
<dbReference type="InterPro" id="IPR006029">
    <property type="entry name" value="Neurotrans-gated_channel_TM"/>
</dbReference>
<dbReference type="InterPro" id="IPR018000">
    <property type="entry name" value="Neurotransmitter_ion_chnl_CS"/>
</dbReference>
<dbReference type="NCBIfam" id="TIGR00860">
    <property type="entry name" value="LIC"/>
    <property type="match status" value="1"/>
</dbReference>
<dbReference type="PANTHER" id="PTHR18945">
    <property type="entry name" value="NEUROTRANSMITTER GATED ION CHANNEL"/>
    <property type="match status" value="1"/>
</dbReference>
<dbReference type="Pfam" id="PF02931">
    <property type="entry name" value="Neur_chan_LBD"/>
    <property type="match status" value="1"/>
</dbReference>
<dbReference type="Pfam" id="PF02932">
    <property type="entry name" value="Neur_chan_memb"/>
    <property type="match status" value="1"/>
</dbReference>
<dbReference type="PRINTS" id="PR00253">
    <property type="entry name" value="GABAARECEPTR"/>
</dbReference>
<dbReference type="PRINTS" id="PR00252">
    <property type="entry name" value="NRIONCHANNEL"/>
</dbReference>
<dbReference type="SUPFAM" id="SSF90112">
    <property type="entry name" value="Neurotransmitter-gated ion-channel transmembrane pore"/>
    <property type="match status" value="1"/>
</dbReference>
<dbReference type="SUPFAM" id="SSF63712">
    <property type="entry name" value="Nicotinic receptor ligand binding domain-like"/>
    <property type="match status" value="1"/>
</dbReference>
<dbReference type="PROSITE" id="PS00236">
    <property type="entry name" value="NEUROTR_ION_CHANNEL"/>
    <property type="match status" value="1"/>
</dbReference>
<reference key="1">
    <citation type="journal article" date="1996" name="Biochim. Biophys. Acta">
        <title>Cloning of a putative gamma-aminobutyric acid (GABA) receptor subunit rho 3 cDNA.</title>
        <authorList>
            <person name="Ogurusu T."/>
            <person name="Shingai R."/>
        </authorList>
    </citation>
    <scope>NUCLEOTIDE SEQUENCE [MRNA]</scope>
    <scope>TISSUE SPECIFICITY</scope>
    <source>
        <strain>Sprague-Dawley</strain>
        <tissue>Retina</tissue>
    </source>
</reference>
<reference key="2">
    <citation type="journal article" date="2002" name="Br. J. Pharmacol.">
        <title>trans-4-Amino-2-methylbut-2-enoic acid (2-MeTACA) and (+/-)-trans-2-aminomethylcyclopropanecarboxylic acid ((+/-)-TAMP) can differentiate rat rho3 from human rho1 and rho2 recombinant GABA(C) receptors.</title>
        <authorList>
            <person name="Vien J."/>
            <person name="Duke R.K."/>
            <person name="Mewett K.N."/>
            <person name="Johnston G.A."/>
            <person name="Shingai R."/>
            <person name="Chebib M."/>
        </authorList>
    </citation>
    <scope>FUNCTION</scope>
    <scope>TRANSPORTER ACTIVITY</scope>
    <scope>HOMOPENTAMER</scope>
    <scope>ACTIVITY REGULATION</scope>
</reference>
<reference key="3">
    <citation type="journal article" date="2003" name="J. Biol. Chem.">
        <title>ZIP3, a new splice variant of the PKC-zeta-interacting protein family, binds to GABAC receptors, PKC-zeta, and Kv beta 2.</title>
        <authorList>
            <person name="Croci C."/>
            <person name="Brandstaetter J.H."/>
            <person name="Enz R."/>
        </authorList>
    </citation>
    <scope>INTERACTION WITH SQSTM1 AND PRKCZ</scope>
    <scope>DOMAIN</scope>
</reference>
<gene>
    <name evidence="10" type="primary">Gabrr3</name>
</gene>
<evidence type="ECO:0000250" key="1">
    <source>
        <dbReference type="UniProtKB" id="P24046"/>
    </source>
</evidence>
<evidence type="ECO:0000250" key="2">
    <source>
        <dbReference type="UniProtKB" id="P28472"/>
    </source>
</evidence>
<evidence type="ECO:0000255" key="3"/>
<evidence type="ECO:0000269" key="4">
    <source>
    </source>
</evidence>
<evidence type="ECO:0000269" key="5">
    <source>
    </source>
</evidence>
<evidence type="ECO:0000269" key="6">
    <source>
    </source>
</evidence>
<evidence type="ECO:0000303" key="7">
    <source>
    </source>
</evidence>
<evidence type="ECO:0000303" key="8">
    <source>
    </source>
</evidence>
<evidence type="ECO:0000305" key="9"/>
<evidence type="ECO:0000312" key="10">
    <source>
        <dbReference type="RGD" id="621564"/>
    </source>
</evidence>
<keyword id="KW-1003">Cell membrane</keyword>
<keyword id="KW-0868">Chloride</keyword>
<keyword id="KW-0869">Chloride channel</keyword>
<keyword id="KW-1015">Disulfide bond</keyword>
<keyword id="KW-0325">Glycoprotein</keyword>
<keyword id="KW-0407">Ion channel</keyword>
<keyword id="KW-0406">Ion transport</keyword>
<keyword id="KW-0472">Membrane</keyword>
<keyword id="KW-0628">Postsynaptic cell membrane</keyword>
<keyword id="KW-1185">Reference proteome</keyword>
<keyword id="KW-0732">Signal</keyword>
<keyword id="KW-0770">Synapse</keyword>
<keyword id="KW-0812">Transmembrane</keyword>
<keyword id="KW-1133">Transmembrane helix</keyword>
<keyword id="KW-0813">Transport</keyword>
<organism>
    <name type="scientific">Rattus norvegicus</name>
    <name type="common">Rat</name>
    <dbReference type="NCBI Taxonomy" id="10116"/>
    <lineage>
        <taxon>Eukaryota</taxon>
        <taxon>Metazoa</taxon>
        <taxon>Chordata</taxon>
        <taxon>Craniata</taxon>
        <taxon>Vertebrata</taxon>
        <taxon>Euteleostomi</taxon>
        <taxon>Mammalia</taxon>
        <taxon>Eutheria</taxon>
        <taxon>Euarchontoglires</taxon>
        <taxon>Glires</taxon>
        <taxon>Rodentia</taxon>
        <taxon>Myomorpha</taxon>
        <taxon>Muroidea</taxon>
        <taxon>Muridae</taxon>
        <taxon>Murinae</taxon>
        <taxon>Rattus</taxon>
    </lineage>
</organism>
<name>GBRR3_RAT</name>
<feature type="signal peptide" evidence="3">
    <location>
        <begin position="1"/>
        <end position="15"/>
    </location>
</feature>
<feature type="chain" id="PRO_0000000491" description="Gamma-aminobutyric acid receptor subunit rho-3" evidence="3">
    <location>
        <begin position="16"/>
        <end position="464"/>
    </location>
</feature>
<feature type="topological domain" description="Extracellular" evidence="9">
    <location>
        <begin position="16"/>
        <end position="263"/>
    </location>
</feature>
<feature type="transmembrane region" description="Helical" evidence="3">
    <location>
        <begin position="264"/>
        <end position="284"/>
    </location>
</feature>
<feature type="topological domain" description="Cytoplasmic" evidence="9">
    <location>
        <begin position="285"/>
        <end position="296"/>
    </location>
</feature>
<feature type="transmembrane region" description="Helical" evidence="3">
    <location>
        <begin position="297"/>
        <end position="317"/>
    </location>
</feature>
<feature type="topological domain" description="Extracellular" evidence="9">
    <location>
        <begin position="318"/>
        <end position="328"/>
    </location>
</feature>
<feature type="transmembrane region" description="Helical" evidence="3">
    <location>
        <begin position="329"/>
        <end position="349"/>
    </location>
</feature>
<feature type="topological domain" description="Cytoplasmic" evidence="9">
    <location>
        <begin position="350"/>
        <end position="443"/>
    </location>
</feature>
<feature type="transmembrane region" description="Helical" evidence="3">
    <location>
        <begin position="444"/>
        <end position="464"/>
    </location>
</feature>
<feature type="region of interest" description="Interaction with SQSTM1" evidence="5">
    <location>
        <begin position="344"/>
        <end position="445"/>
    </location>
</feature>
<feature type="binding site" description="in chain A" evidence="1">
    <location>
        <position position="108"/>
    </location>
    <ligand>
        <name>4-aminobutanoate</name>
        <dbReference type="ChEBI" id="CHEBI:59888"/>
        <note>ligand shared between two neighboring rho subunits</note>
    </ligand>
</feature>
<feature type="binding site" description="in chain A" evidence="1">
    <location>
        <position position="172"/>
    </location>
    <ligand>
        <name>4-aminobutanoate</name>
        <dbReference type="ChEBI" id="CHEBI:59888"/>
        <note>ligand shared between two neighboring rho subunits</note>
    </ligand>
</feature>
<feature type="binding site" description="in chain B" evidence="1">
    <location>
        <position position="200"/>
    </location>
    <ligand>
        <name>4-aminobutanoate</name>
        <dbReference type="ChEBI" id="CHEBI:59888"/>
        <note>ligand shared between two neighboring rho subunits</note>
    </ligand>
</feature>
<feature type="glycosylation site" description="N-linked (GlcNAc...) asparagine" evidence="3">
    <location>
        <position position="123"/>
    </location>
</feature>
<feature type="glycosylation site" description="N-linked (GlcNAc...) asparagine" evidence="3">
    <location>
        <position position="194"/>
    </location>
</feature>
<feature type="disulfide bond" evidence="2">
    <location>
        <begin position="181"/>
        <end position="195"/>
    </location>
</feature>
<protein>
    <recommendedName>
        <fullName evidence="8">Gamma-aminobutyric acid receptor subunit rho-3</fullName>
    </recommendedName>
    <alternativeName>
        <fullName>GABA(A) receptor subunit rho-3</fullName>
        <shortName>GABAAR subunit rho-3</shortName>
    </alternativeName>
    <alternativeName>
        <fullName evidence="7">GABA(C) receptor</fullName>
    </alternativeName>
</protein>
<proteinExistence type="evidence at protein level"/>
<sequence length="464" mass="54031">MVLAFWLAFFTYTWITLMLDASAVKEPHQQCLSSPKQTRIRETRMRKDDLTKVWPLKREQLLHIEDHDFSTRPGFGGSPVPVGIDVQVESIDSISEVNMDFTMTFYLRHYWKDERLSFPSTTNKSMTFDRRLIQKIWVPDIFFVHSKRSFIHDTTVENIMLRVHPDGNVLFSLRITVSAMCFMDFSRFPLDTQNCSLELESYAYNEEDLMLYWKHGNKSLNTEEHISLSQFFIEEFSASSGLAFYSSTGWYYRLFINFVLRRHIFFFVLQTYFPAMLMVMLSWVSFWIDRRAVPARVSLGITTVLTMSTIVTGVSASMPQVSYVKAVDVYMWVSSLFVFLSVIEYAAVNYLTTVEEWKQLNRRGKISGMYNIDAVQAMAFDGCYHDGETDVDQTSFFLHSEEDSMRTKFTGSPCADSSQIKRKSLGGNVGRIILENNHVIDTYSRIVFPVVYIIFNLFYWGIYV</sequence>
<accession>P50573</accession>